<feature type="chain" id="PRO_1000191627" description="Malate dehydrogenase">
    <location>
        <begin position="1"/>
        <end position="329"/>
    </location>
</feature>
<feature type="active site" description="Proton acceptor" evidence="1">
    <location>
        <position position="190"/>
    </location>
</feature>
<feature type="binding site" evidence="1">
    <location>
        <begin position="12"/>
        <end position="18"/>
    </location>
    <ligand>
        <name>NAD(+)</name>
        <dbReference type="ChEBI" id="CHEBI:57540"/>
    </ligand>
</feature>
<feature type="binding site" evidence="1">
    <location>
        <position position="95"/>
    </location>
    <ligand>
        <name>substrate</name>
    </ligand>
</feature>
<feature type="binding site" evidence="1">
    <location>
        <position position="101"/>
    </location>
    <ligand>
        <name>substrate</name>
    </ligand>
</feature>
<feature type="binding site" evidence="1">
    <location>
        <position position="108"/>
    </location>
    <ligand>
        <name>NAD(+)</name>
        <dbReference type="ChEBI" id="CHEBI:57540"/>
    </ligand>
</feature>
<feature type="binding site" evidence="1">
    <location>
        <position position="115"/>
    </location>
    <ligand>
        <name>NAD(+)</name>
        <dbReference type="ChEBI" id="CHEBI:57540"/>
    </ligand>
</feature>
<feature type="binding site" evidence="1">
    <location>
        <begin position="132"/>
        <end position="134"/>
    </location>
    <ligand>
        <name>NAD(+)</name>
        <dbReference type="ChEBI" id="CHEBI:57540"/>
    </ligand>
</feature>
<feature type="binding site" evidence="1">
    <location>
        <position position="134"/>
    </location>
    <ligand>
        <name>substrate</name>
    </ligand>
</feature>
<feature type="binding site" evidence="1">
    <location>
        <position position="165"/>
    </location>
    <ligand>
        <name>substrate</name>
    </ligand>
</feature>
<keyword id="KW-0520">NAD</keyword>
<keyword id="KW-0560">Oxidoreductase</keyword>
<keyword id="KW-0816">Tricarboxylic acid cycle</keyword>
<reference key="1">
    <citation type="journal article" date="2013" name="Proc. Natl. Acad. Sci. U.S.A.">
        <title>Polynucleobacter necessarius, a model for genome reduction in both free-living and symbiotic bacteria.</title>
        <authorList>
            <person name="Boscaro V."/>
            <person name="Felletti M."/>
            <person name="Vannini C."/>
            <person name="Ackerman M.S."/>
            <person name="Chain P.S."/>
            <person name="Malfatti S."/>
            <person name="Vergez L.M."/>
            <person name="Shin M."/>
            <person name="Doak T.G."/>
            <person name="Lynch M."/>
            <person name="Petroni G."/>
        </authorList>
    </citation>
    <scope>NUCLEOTIDE SEQUENCE [LARGE SCALE GENOMIC DNA]</scope>
    <source>
        <strain>STIR1</strain>
    </source>
</reference>
<sequence>MAKAPMRVAVTGAAGQIGYSLLFRIANGDLLGKDQPVILQLLEIPDEKAQKALAGVMMELEDCAFPLLAGMTAHSDPMTAFKDIDVALLVGARPRGPGMERKDLLSANAQIFTAQGKALNVVAKKTVKVLVVGNPANTNAYIAMKSAPDIPAKNFTAMLRLDHNRALSQLANKLNKPVADIEKLVVWGNHSPTMYPDYRFATIDGKSVKDSINDAAWNKDVFIPTVGKRGAAIIEARGLSSAASAANAAIDHIHDWVLGTNGKWVTMGIPSKGEYDIPAEVIYGFPVVCENGEYKMIEGLEIDEFSRERMTHTLNELLEEQAGVKHLLS</sequence>
<name>MDH_POLNS</name>
<protein>
    <recommendedName>
        <fullName evidence="1">Malate dehydrogenase</fullName>
        <ecNumber evidence="1">1.1.1.37</ecNumber>
    </recommendedName>
</protein>
<dbReference type="EC" id="1.1.1.37" evidence="1"/>
<dbReference type="EMBL" id="CP001010">
    <property type="protein sequence ID" value="ACB44240.1"/>
    <property type="molecule type" value="Genomic_DNA"/>
</dbReference>
<dbReference type="SMR" id="B1XV63"/>
<dbReference type="STRING" id="452638.Pnec_1065"/>
<dbReference type="KEGG" id="pne:Pnec_1065"/>
<dbReference type="eggNOG" id="COG0039">
    <property type="taxonomic scope" value="Bacteria"/>
</dbReference>
<dbReference type="HOGENOM" id="CLU_040727_2_0_4"/>
<dbReference type="OrthoDB" id="9802969at2"/>
<dbReference type="GO" id="GO:0030060">
    <property type="term" value="F:L-malate dehydrogenase (NAD+) activity"/>
    <property type="evidence" value="ECO:0007669"/>
    <property type="project" value="UniProtKB-UniRule"/>
</dbReference>
<dbReference type="GO" id="GO:0006108">
    <property type="term" value="P:malate metabolic process"/>
    <property type="evidence" value="ECO:0007669"/>
    <property type="project" value="InterPro"/>
</dbReference>
<dbReference type="GO" id="GO:0006099">
    <property type="term" value="P:tricarboxylic acid cycle"/>
    <property type="evidence" value="ECO:0007669"/>
    <property type="project" value="UniProtKB-UniRule"/>
</dbReference>
<dbReference type="CDD" id="cd01338">
    <property type="entry name" value="MDH_chloroplast-like"/>
    <property type="match status" value="1"/>
</dbReference>
<dbReference type="FunFam" id="3.40.50.720:FF:000010">
    <property type="entry name" value="Malate dehydrogenase"/>
    <property type="match status" value="1"/>
</dbReference>
<dbReference type="FunFam" id="3.90.110.10:FF:000002">
    <property type="entry name" value="Malate dehydrogenase"/>
    <property type="match status" value="1"/>
</dbReference>
<dbReference type="Gene3D" id="3.90.110.10">
    <property type="entry name" value="Lactate dehydrogenase/glycoside hydrolase, family 4, C-terminal"/>
    <property type="match status" value="1"/>
</dbReference>
<dbReference type="Gene3D" id="3.40.50.720">
    <property type="entry name" value="NAD(P)-binding Rossmann-like Domain"/>
    <property type="match status" value="1"/>
</dbReference>
<dbReference type="HAMAP" id="MF_01517">
    <property type="entry name" value="Malate_dehydrog_2"/>
    <property type="match status" value="1"/>
</dbReference>
<dbReference type="InterPro" id="IPR001557">
    <property type="entry name" value="L-lactate/malate_DH"/>
</dbReference>
<dbReference type="InterPro" id="IPR022383">
    <property type="entry name" value="Lactate/malate_DH_C"/>
</dbReference>
<dbReference type="InterPro" id="IPR001236">
    <property type="entry name" value="Lactate/malate_DH_N"/>
</dbReference>
<dbReference type="InterPro" id="IPR015955">
    <property type="entry name" value="Lactate_DH/Glyco_Ohase_4_C"/>
</dbReference>
<dbReference type="InterPro" id="IPR010945">
    <property type="entry name" value="Malate_DH_type2"/>
</dbReference>
<dbReference type="InterPro" id="IPR036291">
    <property type="entry name" value="NAD(P)-bd_dom_sf"/>
</dbReference>
<dbReference type="NCBIfam" id="TIGR01759">
    <property type="entry name" value="MalateDH-SF1"/>
    <property type="match status" value="1"/>
</dbReference>
<dbReference type="NCBIfam" id="NF003916">
    <property type="entry name" value="PRK05442.1"/>
    <property type="match status" value="1"/>
</dbReference>
<dbReference type="PANTHER" id="PTHR23382">
    <property type="entry name" value="MALATE DEHYDROGENASE"/>
    <property type="match status" value="1"/>
</dbReference>
<dbReference type="Pfam" id="PF02866">
    <property type="entry name" value="Ldh_1_C"/>
    <property type="match status" value="1"/>
</dbReference>
<dbReference type="Pfam" id="PF00056">
    <property type="entry name" value="Ldh_1_N"/>
    <property type="match status" value="1"/>
</dbReference>
<dbReference type="PIRSF" id="PIRSF000102">
    <property type="entry name" value="Lac_mal_DH"/>
    <property type="match status" value="1"/>
</dbReference>
<dbReference type="SUPFAM" id="SSF56327">
    <property type="entry name" value="LDH C-terminal domain-like"/>
    <property type="match status" value="1"/>
</dbReference>
<dbReference type="SUPFAM" id="SSF51735">
    <property type="entry name" value="NAD(P)-binding Rossmann-fold domains"/>
    <property type="match status" value="1"/>
</dbReference>
<organism>
    <name type="scientific">Polynucleobacter necessarius subsp. necessarius (strain STIR1)</name>
    <dbReference type="NCBI Taxonomy" id="452638"/>
    <lineage>
        <taxon>Bacteria</taxon>
        <taxon>Pseudomonadati</taxon>
        <taxon>Pseudomonadota</taxon>
        <taxon>Betaproteobacteria</taxon>
        <taxon>Burkholderiales</taxon>
        <taxon>Burkholderiaceae</taxon>
        <taxon>Polynucleobacter</taxon>
    </lineage>
</organism>
<accession>B1XV63</accession>
<gene>
    <name evidence="1" type="primary">mdh</name>
    <name type="ordered locus">Pnec_1065</name>
</gene>
<evidence type="ECO:0000255" key="1">
    <source>
        <dbReference type="HAMAP-Rule" id="MF_01517"/>
    </source>
</evidence>
<comment type="function">
    <text evidence="1">Catalyzes the reversible oxidation of malate to oxaloacetate.</text>
</comment>
<comment type="catalytic activity">
    <reaction evidence="1">
        <text>(S)-malate + NAD(+) = oxaloacetate + NADH + H(+)</text>
        <dbReference type="Rhea" id="RHEA:21432"/>
        <dbReference type="ChEBI" id="CHEBI:15378"/>
        <dbReference type="ChEBI" id="CHEBI:15589"/>
        <dbReference type="ChEBI" id="CHEBI:16452"/>
        <dbReference type="ChEBI" id="CHEBI:57540"/>
        <dbReference type="ChEBI" id="CHEBI:57945"/>
        <dbReference type="EC" id="1.1.1.37"/>
    </reaction>
</comment>
<comment type="similarity">
    <text evidence="1">Belongs to the LDH/MDH superfamily. MDH type 2 family.</text>
</comment>
<proteinExistence type="inferred from homology"/>